<organism>
    <name type="scientific">Enterobacter sp. (strain 638)</name>
    <dbReference type="NCBI Taxonomy" id="399742"/>
    <lineage>
        <taxon>Bacteria</taxon>
        <taxon>Pseudomonadati</taxon>
        <taxon>Pseudomonadota</taxon>
        <taxon>Gammaproteobacteria</taxon>
        <taxon>Enterobacterales</taxon>
        <taxon>Enterobacteriaceae</taxon>
        <taxon>Enterobacter</taxon>
    </lineage>
</organism>
<feature type="chain" id="PRO_1000057143" description="Holliday junction branch migration complex subunit RuvB">
    <location>
        <begin position="1"/>
        <end position="336"/>
    </location>
</feature>
<feature type="region of interest" description="Large ATPase domain (RuvB-L)" evidence="1">
    <location>
        <begin position="4"/>
        <end position="184"/>
    </location>
</feature>
<feature type="region of interest" description="Small ATPAse domain (RuvB-S)" evidence="1">
    <location>
        <begin position="185"/>
        <end position="255"/>
    </location>
</feature>
<feature type="region of interest" description="Head domain (RuvB-H)" evidence="1">
    <location>
        <begin position="258"/>
        <end position="336"/>
    </location>
</feature>
<feature type="binding site" evidence="1">
    <location>
        <position position="23"/>
    </location>
    <ligand>
        <name>ATP</name>
        <dbReference type="ChEBI" id="CHEBI:30616"/>
    </ligand>
</feature>
<feature type="binding site" evidence="1">
    <location>
        <position position="24"/>
    </location>
    <ligand>
        <name>ATP</name>
        <dbReference type="ChEBI" id="CHEBI:30616"/>
    </ligand>
</feature>
<feature type="binding site" evidence="1">
    <location>
        <position position="65"/>
    </location>
    <ligand>
        <name>ATP</name>
        <dbReference type="ChEBI" id="CHEBI:30616"/>
    </ligand>
</feature>
<feature type="binding site" evidence="1">
    <location>
        <position position="68"/>
    </location>
    <ligand>
        <name>ATP</name>
        <dbReference type="ChEBI" id="CHEBI:30616"/>
    </ligand>
</feature>
<feature type="binding site" evidence="1">
    <location>
        <position position="69"/>
    </location>
    <ligand>
        <name>ATP</name>
        <dbReference type="ChEBI" id="CHEBI:30616"/>
    </ligand>
</feature>
<feature type="binding site" evidence="1">
    <location>
        <position position="69"/>
    </location>
    <ligand>
        <name>Mg(2+)</name>
        <dbReference type="ChEBI" id="CHEBI:18420"/>
    </ligand>
</feature>
<feature type="binding site" evidence="1">
    <location>
        <position position="70"/>
    </location>
    <ligand>
        <name>ATP</name>
        <dbReference type="ChEBI" id="CHEBI:30616"/>
    </ligand>
</feature>
<feature type="binding site" evidence="1">
    <location>
        <begin position="131"/>
        <end position="133"/>
    </location>
    <ligand>
        <name>ATP</name>
        <dbReference type="ChEBI" id="CHEBI:30616"/>
    </ligand>
</feature>
<feature type="binding site" evidence="1">
    <location>
        <position position="174"/>
    </location>
    <ligand>
        <name>ATP</name>
        <dbReference type="ChEBI" id="CHEBI:30616"/>
    </ligand>
</feature>
<feature type="binding site" evidence="1">
    <location>
        <position position="184"/>
    </location>
    <ligand>
        <name>ATP</name>
        <dbReference type="ChEBI" id="CHEBI:30616"/>
    </ligand>
</feature>
<feature type="binding site" evidence="1">
    <location>
        <position position="221"/>
    </location>
    <ligand>
        <name>ATP</name>
        <dbReference type="ChEBI" id="CHEBI:30616"/>
    </ligand>
</feature>
<feature type="binding site" evidence="1">
    <location>
        <position position="294"/>
    </location>
    <ligand>
        <name>DNA</name>
        <dbReference type="ChEBI" id="CHEBI:16991"/>
    </ligand>
</feature>
<feature type="binding site" evidence="1">
    <location>
        <position position="313"/>
    </location>
    <ligand>
        <name>DNA</name>
        <dbReference type="ChEBI" id="CHEBI:16991"/>
    </ligand>
</feature>
<feature type="binding site" evidence="1">
    <location>
        <position position="318"/>
    </location>
    <ligand>
        <name>DNA</name>
        <dbReference type="ChEBI" id="CHEBI:16991"/>
    </ligand>
</feature>
<protein>
    <recommendedName>
        <fullName evidence="1">Holliday junction branch migration complex subunit RuvB</fullName>
        <ecNumber evidence="1">3.6.4.-</ecNumber>
    </recommendedName>
</protein>
<comment type="function">
    <text evidence="1">The RuvA-RuvB-RuvC complex processes Holliday junction (HJ) DNA during genetic recombination and DNA repair, while the RuvA-RuvB complex plays an important role in the rescue of blocked DNA replication forks via replication fork reversal (RFR). RuvA specifically binds to HJ cruciform DNA, conferring on it an open structure. The RuvB hexamer acts as an ATP-dependent pump, pulling dsDNA into and through the RuvAB complex. RuvB forms 2 homohexamers on either side of HJ DNA bound by 1 or 2 RuvA tetramers; 4 subunits per hexamer contact DNA at a time. Coordinated motions by a converter formed by DNA-disengaged RuvB subunits stimulates ATP hydrolysis and nucleotide exchange. Immobilization of the converter enables RuvB to convert the ATP-contained energy into a lever motion, pulling 2 nucleotides of DNA out of the RuvA tetramer per ATP hydrolyzed, thus driving DNA branch migration. The RuvB motors rotate together with the DNA substrate, which together with the progressing nucleotide cycle form the mechanistic basis for DNA recombination by continuous HJ branch migration. Branch migration allows RuvC to scan DNA until it finds its consensus sequence, where it cleaves and resolves cruciform DNA.</text>
</comment>
<comment type="catalytic activity">
    <reaction evidence="1">
        <text>ATP + H2O = ADP + phosphate + H(+)</text>
        <dbReference type="Rhea" id="RHEA:13065"/>
        <dbReference type="ChEBI" id="CHEBI:15377"/>
        <dbReference type="ChEBI" id="CHEBI:15378"/>
        <dbReference type="ChEBI" id="CHEBI:30616"/>
        <dbReference type="ChEBI" id="CHEBI:43474"/>
        <dbReference type="ChEBI" id="CHEBI:456216"/>
    </reaction>
</comment>
<comment type="subunit">
    <text evidence="1">Homohexamer. Forms an RuvA(8)-RuvB(12)-Holliday junction (HJ) complex. HJ DNA is sandwiched between 2 RuvA tetramers; dsDNA enters through RuvA and exits via RuvB. An RuvB hexamer assembles on each DNA strand where it exits the tetramer. Each RuvB hexamer is contacted by two RuvA subunits (via domain III) on 2 adjacent RuvB subunits; this complex drives branch migration. In the full resolvosome a probable DNA-RuvA(4)-RuvB(12)-RuvC(2) complex forms which resolves the HJ.</text>
</comment>
<comment type="subcellular location">
    <subcellularLocation>
        <location evidence="1">Cytoplasm</location>
    </subcellularLocation>
</comment>
<comment type="domain">
    <text evidence="1">Has 3 domains, the large (RuvB-L) and small ATPase (RuvB-S) domains and the C-terminal head (RuvB-H) domain. The head domain binds DNA, while the ATPase domains jointly bind ATP, ADP or are empty depending on the state of the subunit in the translocation cycle. During a single DNA translocation step the structure of each domain remains the same, but their relative positions change.</text>
</comment>
<comment type="similarity">
    <text evidence="1">Belongs to the RuvB family.</text>
</comment>
<gene>
    <name evidence="1" type="primary">ruvB</name>
    <name type="ordered locus">Ent638_2429</name>
</gene>
<accession>A4WBL8</accession>
<keyword id="KW-0067">ATP-binding</keyword>
<keyword id="KW-0963">Cytoplasm</keyword>
<keyword id="KW-0227">DNA damage</keyword>
<keyword id="KW-0233">DNA recombination</keyword>
<keyword id="KW-0234">DNA repair</keyword>
<keyword id="KW-0238">DNA-binding</keyword>
<keyword id="KW-0378">Hydrolase</keyword>
<keyword id="KW-0547">Nucleotide-binding</keyword>
<dbReference type="EC" id="3.6.4.-" evidence="1"/>
<dbReference type="EMBL" id="CP000653">
    <property type="protein sequence ID" value="ABP61098.1"/>
    <property type="molecule type" value="Genomic_DNA"/>
</dbReference>
<dbReference type="RefSeq" id="WP_015959431.1">
    <property type="nucleotide sequence ID" value="NC_009436.1"/>
</dbReference>
<dbReference type="SMR" id="A4WBL8"/>
<dbReference type="STRING" id="399742.Ent638_2429"/>
<dbReference type="KEGG" id="ent:Ent638_2429"/>
<dbReference type="eggNOG" id="COG2255">
    <property type="taxonomic scope" value="Bacteria"/>
</dbReference>
<dbReference type="HOGENOM" id="CLU_055599_1_0_6"/>
<dbReference type="OrthoDB" id="9804478at2"/>
<dbReference type="Proteomes" id="UP000000230">
    <property type="component" value="Chromosome"/>
</dbReference>
<dbReference type="GO" id="GO:0005737">
    <property type="term" value="C:cytoplasm"/>
    <property type="evidence" value="ECO:0007669"/>
    <property type="project" value="UniProtKB-SubCell"/>
</dbReference>
<dbReference type="GO" id="GO:0048476">
    <property type="term" value="C:Holliday junction resolvase complex"/>
    <property type="evidence" value="ECO:0007669"/>
    <property type="project" value="UniProtKB-UniRule"/>
</dbReference>
<dbReference type="GO" id="GO:0005524">
    <property type="term" value="F:ATP binding"/>
    <property type="evidence" value="ECO:0007669"/>
    <property type="project" value="UniProtKB-UniRule"/>
</dbReference>
<dbReference type="GO" id="GO:0016887">
    <property type="term" value="F:ATP hydrolysis activity"/>
    <property type="evidence" value="ECO:0007669"/>
    <property type="project" value="InterPro"/>
</dbReference>
<dbReference type="GO" id="GO:0000400">
    <property type="term" value="F:four-way junction DNA binding"/>
    <property type="evidence" value="ECO:0007669"/>
    <property type="project" value="UniProtKB-UniRule"/>
</dbReference>
<dbReference type="GO" id="GO:0009378">
    <property type="term" value="F:four-way junction helicase activity"/>
    <property type="evidence" value="ECO:0007669"/>
    <property type="project" value="InterPro"/>
</dbReference>
<dbReference type="GO" id="GO:0006310">
    <property type="term" value="P:DNA recombination"/>
    <property type="evidence" value="ECO:0007669"/>
    <property type="project" value="UniProtKB-UniRule"/>
</dbReference>
<dbReference type="GO" id="GO:0006281">
    <property type="term" value="P:DNA repair"/>
    <property type="evidence" value="ECO:0007669"/>
    <property type="project" value="UniProtKB-UniRule"/>
</dbReference>
<dbReference type="CDD" id="cd00009">
    <property type="entry name" value="AAA"/>
    <property type="match status" value="1"/>
</dbReference>
<dbReference type="FunFam" id="1.10.10.10:FF:000086">
    <property type="entry name" value="Holliday junction ATP-dependent DNA helicase RuvB"/>
    <property type="match status" value="1"/>
</dbReference>
<dbReference type="FunFam" id="1.10.8.60:FF:000023">
    <property type="entry name" value="Holliday junction ATP-dependent DNA helicase RuvB"/>
    <property type="match status" value="1"/>
</dbReference>
<dbReference type="FunFam" id="3.40.50.300:FF:000073">
    <property type="entry name" value="Holliday junction ATP-dependent DNA helicase RuvB"/>
    <property type="match status" value="1"/>
</dbReference>
<dbReference type="Gene3D" id="1.10.8.60">
    <property type="match status" value="1"/>
</dbReference>
<dbReference type="Gene3D" id="3.40.50.300">
    <property type="entry name" value="P-loop containing nucleotide triphosphate hydrolases"/>
    <property type="match status" value="1"/>
</dbReference>
<dbReference type="Gene3D" id="1.10.10.10">
    <property type="entry name" value="Winged helix-like DNA-binding domain superfamily/Winged helix DNA-binding domain"/>
    <property type="match status" value="1"/>
</dbReference>
<dbReference type="HAMAP" id="MF_00016">
    <property type="entry name" value="DNA_HJ_migration_RuvB"/>
    <property type="match status" value="1"/>
</dbReference>
<dbReference type="InterPro" id="IPR003593">
    <property type="entry name" value="AAA+_ATPase"/>
</dbReference>
<dbReference type="InterPro" id="IPR041445">
    <property type="entry name" value="AAA_lid_4"/>
</dbReference>
<dbReference type="InterPro" id="IPR004605">
    <property type="entry name" value="DNA_helicase_Holl-junc_RuvB"/>
</dbReference>
<dbReference type="InterPro" id="IPR027417">
    <property type="entry name" value="P-loop_NTPase"/>
</dbReference>
<dbReference type="InterPro" id="IPR008824">
    <property type="entry name" value="RuvB-like_N"/>
</dbReference>
<dbReference type="InterPro" id="IPR008823">
    <property type="entry name" value="RuvB_C"/>
</dbReference>
<dbReference type="InterPro" id="IPR036388">
    <property type="entry name" value="WH-like_DNA-bd_sf"/>
</dbReference>
<dbReference type="InterPro" id="IPR036390">
    <property type="entry name" value="WH_DNA-bd_sf"/>
</dbReference>
<dbReference type="NCBIfam" id="NF000868">
    <property type="entry name" value="PRK00080.1"/>
    <property type="match status" value="1"/>
</dbReference>
<dbReference type="NCBIfam" id="TIGR00635">
    <property type="entry name" value="ruvB"/>
    <property type="match status" value="1"/>
</dbReference>
<dbReference type="PANTHER" id="PTHR42848">
    <property type="match status" value="1"/>
</dbReference>
<dbReference type="PANTHER" id="PTHR42848:SF1">
    <property type="entry name" value="HOLLIDAY JUNCTION BRANCH MIGRATION COMPLEX SUBUNIT RUVB"/>
    <property type="match status" value="1"/>
</dbReference>
<dbReference type="Pfam" id="PF17864">
    <property type="entry name" value="AAA_lid_4"/>
    <property type="match status" value="1"/>
</dbReference>
<dbReference type="Pfam" id="PF05491">
    <property type="entry name" value="RuvB_C"/>
    <property type="match status" value="1"/>
</dbReference>
<dbReference type="Pfam" id="PF05496">
    <property type="entry name" value="RuvB_N"/>
    <property type="match status" value="1"/>
</dbReference>
<dbReference type="SMART" id="SM00382">
    <property type="entry name" value="AAA"/>
    <property type="match status" value="1"/>
</dbReference>
<dbReference type="SUPFAM" id="SSF52540">
    <property type="entry name" value="P-loop containing nucleoside triphosphate hydrolases"/>
    <property type="match status" value="1"/>
</dbReference>
<dbReference type="SUPFAM" id="SSF46785">
    <property type="entry name" value="Winged helix' DNA-binding domain"/>
    <property type="match status" value="1"/>
</dbReference>
<proteinExistence type="inferred from homology"/>
<evidence type="ECO:0000255" key="1">
    <source>
        <dbReference type="HAMAP-Rule" id="MF_00016"/>
    </source>
</evidence>
<name>RUVB_ENT38</name>
<sequence>MIEADRLISAASNQPEDVVDRAIRPKLLEEYIGQPQVRSQMEIFIQAAKLRGEALDHLLIFGPPGLGKTTLANIVANEMGVNLRTTSGPVLEKAGDLAAMLTNLEPHDVLFIDEIHRLSPVVEEVLYPAMEDYQLDIMIGEGPAARSIKIDLPPFTLIGATTRAGSLTSPLRDRFGIVQRLEFYQVPDLQYIVGRSARFMGLELSDEGAFEVAKRSRGTPRIANRLLRRVRDFAEVKHDGTISLDVAAQALDMLNVDAEGFDYMDRKLLLAILDKFFGGPVGLDNLAAAIGEERETIEDVLEPYLIQQGFLQRTPRGRMATVRAWNHFGITPPEMP</sequence>
<reference key="1">
    <citation type="journal article" date="2010" name="PLoS Genet.">
        <title>Genome sequence of the plant growth promoting endophytic bacterium Enterobacter sp. 638.</title>
        <authorList>
            <person name="Taghavi S."/>
            <person name="van der Lelie D."/>
            <person name="Hoffman A."/>
            <person name="Zhang Y.B."/>
            <person name="Walla M.D."/>
            <person name="Vangronsveld J."/>
            <person name="Newman L."/>
            <person name="Monchy S."/>
        </authorList>
    </citation>
    <scope>NUCLEOTIDE SEQUENCE [LARGE SCALE GENOMIC DNA]</scope>
    <source>
        <strain>638</strain>
    </source>
</reference>